<feature type="chain" id="PRO_1000122161" description="Integration host factor subunit alpha">
    <location>
        <begin position="1"/>
        <end position="99"/>
    </location>
</feature>
<feature type="region of interest" description="Disordered" evidence="2">
    <location>
        <begin position="49"/>
        <end position="75"/>
    </location>
</feature>
<dbReference type="EMBL" id="AM933172">
    <property type="protein sequence ID" value="CAR33287.1"/>
    <property type="molecule type" value="Genomic_DNA"/>
</dbReference>
<dbReference type="RefSeq" id="WP_001229266.1">
    <property type="nucleotide sequence ID" value="NC_011294.1"/>
</dbReference>
<dbReference type="SMR" id="B5QVW2"/>
<dbReference type="GeneID" id="92828695"/>
<dbReference type="KEGG" id="set:SEN1705"/>
<dbReference type="HOGENOM" id="CLU_105066_1_3_6"/>
<dbReference type="Proteomes" id="UP000000613">
    <property type="component" value="Chromosome"/>
</dbReference>
<dbReference type="GO" id="GO:0005829">
    <property type="term" value="C:cytosol"/>
    <property type="evidence" value="ECO:0007669"/>
    <property type="project" value="TreeGrafter"/>
</dbReference>
<dbReference type="GO" id="GO:0003677">
    <property type="term" value="F:DNA binding"/>
    <property type="evidence" value="ECO:0007669"/>
    <property type="project" value="UniProtKB-UniRule"/>
</dbReference>
<dbReference type="GO" id="GO:0030527">
    <property type="term" value="F:structural constituent of chromatin"/>
    <property type="evidence" value="ECO:0007669"/>
    <property type="project" value="InterPro"/>
</dbReference>
<dbReference type="GO" id="GO:0006310">
    <property type="term" value="P:DNA recombination"/>
    <property type="evidence" value="ECO:0007669"/>
    <property type="project" value="UniProtKB-UniRule"/>
</dbReference>
<dbReference type="GO" id="GO:0009893">
    <property type="term" value="P:positive regulation of metabolic process"/>
    <property type="evidence" value="ECO:0007669"/>
    <property type="project" value="UniProtKB-ARBA"/>
</dbReference>
<dbReference type="GO" id="GO:0006355">
    <property type="term" value="P:regulation of DNA-templated transcription"/>
    <property type="evidence" value="ECO:0007669"/>
    <property type="project" value="UniProtKB-UniRule"/>
</dbReference>
<dbReference type="GO" id="GO:0006417">
    <property type="term" value="P:regulation of translation"/>
    <property type="evidence" value="ECO:0007669"/>
    <property type="project" value="UniProtKB-UniRule"/>
</dbReference>
<dbReference type="CDD" id="cd13835">
    <property type="entry name" value="IHF_A"/>
    <property type="match status" value="1"/>
</dbReference>
<dbReference type="FunFam" id="4.10.520.10:FF:000002">
    <property type="entry name" value="Integration host factor subunit alpha"/>
    <property type="match status" value="1"/>
</dbReference>
<dbReference type="Gene3D" id="4.10.520.10">
    <property type="entry name" value="IHF-like DNA-binding proteins"/>
    <property type="match status" value="1"/>
</dbReference>
<dbReference type="HAMAP" id="MF_00380">
    <property type="entry name" value="IHF_alpha"/>
    <property type="match status" value="1"/>
</dbReference>
<dbReference type="InterPro" id="IPR000119">
    <property type="entry name" value="Hist_DNA-bd"/>
</dbReference>
<dbReference type="InterPro" id="IPR020816">
    <property type="entry name" value="Histone-like_DNA-bd_CS"/>
</dbReference>
<dbReference type="InterPro" id="IPR010992">
    <property type="entry name" value="IHF-like_DNA-bd_dom_sf"/>
</dbReference>
<dbReference type="InterPro" id="IPR005684">
    <property type="entry name" value="IHF_alpha"/>
</dbReference>
<dbReference type="NCBIfam" id="TIGR00987">
    <property type="entry name" value="himA"/>
    <property type="match status" value="1"/>
</dbReference>
<dbReference type="NCBIfam" id="NF001401">
    <property type="entry name" value="PRK00285.1"/>
    <property type="match status" value="1"/>
</dbReference>
<dbReference type="PANTHER" id="PTHR33175">
    <property type="entry name" value="DNA-BINDING PROTEIN HU"/>
    <property type="match status" value="1"/>
</dbReference>
<dbReference type="PANTHER" id="PTHR33175:SF2">
    <property type="entry name" value="INTEGRATION HOST FACTOR SUBUNIT ALPHA"/>
    <property type="match status" value="1"/>
</dbReference>
<dbReference type="Pfam" id="PF00216">
    <property type="entry name" value="Bac_DNA_binding"/>
    <property type="match status" value="1"/>
</dbReference>
<dbReference type="PRINTS" id="PR01727">
    <property type="entry name" value="DNABINDINGHU"/>
</dbReference>
<dbReference type="SMART" id="SM00411">
    <property type="entry name" value="BHL"/>
    <property type="match status" value="1"/>
</dbReference>
<dbReference type="SUPFAM" id="SSF47729">
    <property type="entry name" value="IHF-like DNA-binding proteins"/>
    <property type="match status" value="1"/>
</dbReference>
<dbReference type="PROSITE" id="PS00045">
    <property type="entry name" value="HISTONE_LIKE"/>
    <property type="match status" value="1"/>
</dbReference>
<gene>
    <name evidence="1" type="primary">ihfA</name>
    <name evidence="1" type="synonym">himA</name>
    <name type="ordered locus">SEN1705</name>
</gene>
<keyword id="KW-0233">DNA recombination</keyword>
<keyword id="KW-0238">DNA-binding</keyword>
<keyword id="KW-0804">Transcription</keyword>
<keyword id="KW-0805">Transcription regulation</keyword>
<keyword id="KW-0810">Translation regulation</keyword>
<accession>B5QVW2</accession>
<sequence>MALTKAEMSEYLFDKLGLSKRDAKELVELFFEEIRRALENGEQVKLSGFGNFDLRDKNQRPGRNPKTGEDIPITARRVVTFRPGQKLKSRVENASPKEE</sequence>
<organism>
    <name type="scientific">Salmonella enteritidis PT4 (strain P125109)</name>
    <dbReference type="NCBI Taxonomy" id="550537"/>
    <lineage>
        <taxon>Bacteria</taxon>
        <taxon>Pseudomonadati</taxon>
        <taxon>Pseudomonadota</taxon>
        <taxon>Gammaproteobacteria</taxon>
        <taxon>Enterobacterales</taxon>
        <taxon>Enterobacteriaceae</taxon>
        <taxon>Salmonella</taxon>
    </lineage>
</organism>
<evidence type="ECO:0000255" key="1">
    <source>
        <dbReference type="HAMAP-Rule" id="MF_00380"/>
    </source>
</evidence>
<evidence type="ECO:0000256" key="2">
    <source>
        <dbReference type="SAM" id="MobiDB-lite"/>
    </source>
</evidence>
<protein>
    <recommendedName>
        <fullName evidence="1">Integration host factor subunit alpha</fullName>
        <shortName evidence="1">IHF-alpha</shortName>
    </recommendedName>
</protein>
<reference key="1">
    <citation type="journal article" date="2008" name="Genome Res.">
        <title>Comparative genome analysis of Salmonella enteritidis PT4 and Salmonella gallinarum 287/91 provides insights into evolutionary and host adaptation pathways.</title>
        <authorList>
            <person name="Thomson N.R."/>
            <person name="Clayton D.J."/>
            <person name="Windhorst D."/>
            <person name="Vernikos G."/>
            <person name="Davidson S."/>
            <person name="Churcher C."/>
            <person name="Quail M.A."/>
            <person name="Stevens M."/>
            <person name="Jones M.A."/>
            <person name="Watson M."/>
            <person name="Barron A."/>
            <person name="Layton A."/>
            <person name="Pickard D."/>
            <person name="Kingsley R.A."/>
            <person name="Bignell A."/>
            <person name="Clark L."/>
            <person name="Harris B."/>
            <person name="Ormond D."/>
            <person name="Abdellah Z."/>
            <person name="Brooks K."/>
            <person name="Cherevach I."/>
            <person name="Chillingworth T."/>
            <person name="Woodward J."/>
            <person name="Norberczak H."/>
            <person name="Lord A."/>
            <person name="Arrowsmith C."/>
            <person name="Jagels K."/>
            <person name="Moule S."/>
            <person name="Mungall K."/>
            <person name="Saunders M."/>
            <person name="Whitehead S."/>
            <person name="Chabalgoity J.A."/>
            <person name="Maskell D."/>
            <person name="Humphreys T."/>
            <person name="Roberts M."/>
            <person name="Barrow P.A."/>
            <person name="Dougan G."/>
            <person name="Parkhill J."/>
        </authorList>
    </citation>
    <scope>NUCLEOTIDE SEQUENCE [LARGE SCALE GENOMIC DNA]</scope>
    <source>
        <strain>P125109</strain>
    </source>
</reference>
<name>IHFA_SALEP</name>
<comment type="function">
    <text evidence="1">This protein is one of the two subunits of integration host factor, a specific DNA-binding protein that functions in genetic recombination as well as in transcriptional and translational control.</text>
</comment>
<comment type="subunit">
    <text evidence="1">Heterodimer of an alpha and a beta chain.</text>
</comment>
<comment type="similarity">
    <text evidence="1">Belongs to the bacterial histone-like protein family.</text>
</comment>
<proteinExistence type="inferred from homology"/>